<reference key="1">
    <citation type="journal article" date="2000" name="Radiat. Res.">
        <title>Molecular cloning and developmental expression of AtGR1, a new growth-related Arabidopsis gene strongly induced by ionizing radiation.</title>
        <authorList>
            <person name="Deveaux Y."/>
            <person name="Alonso B."/>
            <person name="Pierrugues O."/>
            <person name="Godon C."/>
            <person name="Kazmaier M."/>
        </authorList>
    </citation>
    <scope>NUCLEOTIDE SEQUENCE [GENOMIC DNA]</scope>
    <scope>FUNCTION</scope>
    <scope>INDUCTION</scope>
    <scope>TISSUE SPECIFICITY</scope>
</reference>
<reference key="2">
    <citation type="submission" date="2006-08" db="EMBL/GenBank/DDBJ databases">
        <title>The COM1/SAE2 homolog of Arabidopsis thaliana: identification and characterization of a DNA repair protein essential for meiosis.</title>
        <authorList>
            <person name="Pedrosa-Harand A."/>
            <person name="Siwiec T."/>
            <person name="Uanschou C."/>
            <person name="Kerzendorfer C."/>
            <person name="Sanchez-Moran E."/>
            <person name="Novatchkova M."/>
            <person name="Akimcheva S."/>
            <person name="Klein F."/>
            <person name="Schlogelhofer P."/>
        </authorList>
    </citation>
    <scope>NUCLEOTIDE SEQUENCE [MRNA]</scope>
</reference>
<reference key="3">
    <citation type="journal article" date="2000" name="Nature">
        <title>Sequence and analysis of chromosome 3 of the plant Arabidopsis thaliana.</title>
        <authorList>
            <person name="Salanoubat M."/>
            <person name="Lemcke K."/>
            <person name="Rieger M."/>
            <person name="Ansorge W."/>
            <person name="Unseld M."/>
            <person name="Fartmann B."/>
            <person name="Valle G."/>
            <person name="Bloecker H."/>
            <person name="Perez-Alonso M."/>
            <person name="Obermaier B."/>
            <person name="Delseny M."/>
            <person name="Boutry M."/>
            <person name="Grivell L.A."/>
            <person name="Mache R."/>
            <person name="Puigdomenech P."/>
            <person name="De Simone V."/>
            <person name="Choisne N."/>
            <person name="Artiguenave F."/>
            <person name="Robert C."/>
            <person name="Brottier P."/>
            <person name="Wincker P."/>
            <person name="Cattolico L."/>
            <person name="Weissenbach J."/>
            <person name="Saurin W."/>
            <person name="Quetier F."/>
            <person name="Schaefer M."/>
            <person name="Mueller-Auer S."/>
            <person name="Gabel C."/>
            <person name="Fuchs M."/>
            <person name="Benes V."/>
            <person name="Wurmbach E."/>
            <person name="Drzonek H."/>
            <person name="Erfle H."/>
            <person name="Jordan N."/>
            <person name="Bangert S."/>
            <person name="Wiedelmann R."/>
            <person name="Kranz H."/>
            <person name="Voss H."/>
            <person name="Holland R."/>
            <person name="Brandt P."/>
            <person name="Nyakatura G."/>
            <person name="Vezzi A."/>
            <person name="D'Angelo M."/>
            <person name="Pallavicini A."/>
            <person name="Toppo S."/>
            <person name="Simionati B."/>
            <person name="Conrad A."/>
            <person name="Hornischer K."/>
            <person name="Kauer G."/>
            <person name="Loehnert T.-H."/>
            <person name="Nordsiek G."/>
            <person name="Reichelt J."/>
            <person name="Scharfe M."/>
            <person name="Schoen O."/>
            <person name="Bargues M."/>
            <person name="Terol J."/>
            <person name="Climent J."/>
            <person name="Navarro P."/>
            <person name="Collado C."/>
            <person name="Perez-Perez A."/>
            <person name="Ottenwaelder B."/>
            <person name="Duchemin D."/>
            <person name="Cooke R."/>
            <person name="Laudie M."/>
            <person name="Berger-Llauro C."/>
            <person name="Purnelle B."/>
            <person name="Masuy D."/>
            <person name="de Haan M."/>
            <person name="Maarse A.C."/>
            <person name="Alcaraz J.-P."/>
            <person name="Cottet A."/>
            <person name="Casacuberta E."/>
            <person name="Monfort A."/>
            <person name="Argiriou A."/>
            <person name="Flores M."/>
            <person name="Liguori R."/>
            <person name="Vitale D."/>
            <person name="Mannhaupt G."/>
            <person name="Haase D."/>
            <person name="Schoof H."/>
            <person name="Rudd S."/>
            <person name="Zaccaria P."/>
            <person name="Mewes H.-W."/>
            <person name="Mayer K.F.X."/>
            <person name="Kaul S."/>
            <person name="Town C.D."/>
            <person name="Koo H.L."/>
            <person name="Tallon L.J."/>
            <person name="Jenkins J."/>
            <person name="Rooney T."/>
            <person name="Rizzo M."/>
            <person name="Walts A."/>
            <person name="Utterback T."/>
            <person name="Fujii C.Y."/>
            <person name="Shea T.P."/>
            <person name="Creasy T.H."/>
            <person name="Haas B."/>
            <person name="Maiti R."/>
            <person name="Wu D."/>
            <person name="Peterson J."/>
            <person name="Van Aken S."/>
            <person name="Pai G."/>
            <person name="Militscher J."/>
            <person name="Sellers P."/>
            <person name="Gill J.E."/>
            <person name="Feldblyum T.V."/>
            <person name="Preuss D."/>
            <person name="Lin X."/>
            <person name="Nierman W.C."/>
            <person name="Salzberg S.L."/>
            <person name="White O."/>
            <person name="Venter J.C."/>
            <person name="Fraser C.M."/>
            <person name="Kaneko T."/>
            <person name="Nakamura Y."/>
            <person name="Sato S."/>
            <person name="Kato T."/>
            <person name="Asamizu E."/>
            <person name="Sasamoto S."/>
            <person name="Kimura T."/>
            <person name="Idesawa K."/>
            <person name="Kawashima K."/>
            <person name="Kishida Y."/>
            <person name="Kiyokawa C."/>
            <person name="Kohara M."/>
            <person name="Matsumoto M."/>
            <person name="Matsuno A."/>
            <person name="Muraki A."/>
            <person name="Nakayama S."/>
            <person name="Nakazaki N."/>
            <person name="Shinpo S."/>
            <person name="Takeuchi C."/>
            <person name="Wada T."/>
            <person name="Watanabe A."/>
            <person name="Yamada M."/>
            <person name="Yasuda M."/>
            <person name="Tabata S."/>
        </authorList>
    </citation>
    <scope>NUCLEOTIDE SEQUENCE [LARGE SCALE GENOMIC DNA]</scope>
    <source>
        <strain>cv. Columbia</strain>
    </source>
</reference>
<reference key="4">
    <citation type="journal article" date="2017" name="Plant J.">
        <title>Araport11: a complete reannotation of the Arabidopsis thaliana reference genome.</title>
        <authorList>
            <person name="Cheng C.Y."/>
            <person name="Krishnakumar V."/>
            <person name="Chan A.P."/>
            <person name="Thibaud-Nissen F."/>
            <person name="Schobel S."/>
            <person name="Town C.D."/>
        </authorList>
    </citation>
    <scope>GENOME REANNOTATION</scope>
    <source>
        <strain>cv. Columbia</strain>
    </source>
</reference>
<evidence type="ECO:0000255" key="1"/>
<evidence type="ECO:0000256" key="2">
    <source>
        <dbReference type="SAM" id="MobiDB-lite"/>
    </source>
</evidence>
<evidence type="ECO:0000269" key="3">
    <source>
    </source>
</evidence>
<evidence type="ECO:0000305" key="4"/>
<dbReference type="EMBL" id="AJ131708">
    <property type="protein sequence ID" value="CAA10484.1"/>
    <property type="molecule type" value="Genomic_DNA"/>
</dbReference>
<dbReference type="EMBL" id="DQ925470">
    <property type="protein sequence ID" value="ABI95360.1"/>
    <property type="molecule type" value="mRNA"/>
</dbReference>
<dbReference type="EMBL" id="AL049711">
    <property type="protein sequence ID" value="CAB41332.1"/>
    <property type="status" value="ALT_SEQ"/>
    <property type="molecule type" value="Genomic_DNA"/>
</dbReference>
<dbReference type="EMBL" id="CP002686">
    <property type="protein sequence ID" value="AEE78895.1"/>
    <property type="molecule type" value="Genomic_DNA"/>
</dbReference>
<dbReference type="PIR" id="T48905">
    <property type="entry name" value="T48905"/>
</dbReference>
<dbReference type="PIR" id="T49091">
    <property type="entry name" value="T49091"/>
</dbReference>
<dbReference type="RefSeq" id="NP_850683.1">
    <property type="nucleotide sequence ID" value="NM_180352.3"/>
</dbReference>
<dbReference type="SMR" id="Q9ZRT1"/>
<dbReference type="FunCoup" id="Q9ZRT1">
    <property type="interactions" value="31"/>
</dbReference>
<dbReference type="STRING" id="3702.Q9ZRT1"/>
<dbReference type="iPTMnet" id="Q9ZRT1"/>
<dbReference type="PaxDb" id="3702-AT3G52115.1"/>
<dbReference type="ProteomicsDB" id="220650"/>
<dbReference type="EnsemblPlants" id="AT3G52115.1">
    <property type="protein sequence ID" value="AT3G52115.1"/>
    <property type="gene ID" value="AT3G52115"/>
</dbReference>
<dbReference type="GeneID" id="824375"/>
<dbReference type="Gramene" id="AT3G52115.1">
    <property type="protein sequence ID" value="AT3G52115.1"/>
    <property type="gene ID" value="AT3G52115"/>
</dbReference>
<dbReference type="KEGG" id="ath:AT3G52115"/>
<dbReference type="Araport" id="AT3G52115"/>
<dbReference type="TAIR" id="AT3G52115">
    <property type="gene designation" value="GR1"/>
</dbReference>
<dbReference type="eggNOG" id="KOG0965">
    <property type="taxonomic scope" value="Eukaryota"/>
</dbReference>
<dbReference type="HOGENOM" id="CLU_026815_0_0_1"/>
<dbReference type="InParanoid" id="Q9ZRT1"/>
<dbReference type="OMA" id="QIELLFC"/>
<dbReference type="PhylomeDB" id="Q9ZRT1"/>
<dbReference type="PRO" id="PR:Q9ZRT1"/>
<dbReference type="Proteomes" id="UP000006548">
    <property type="component" value="Chromosome 3"/>
</dbReference>
<dbReference type="ExpressionAtlas" id="Q9ZRT1">
    <property type="expression patterns" value="baseline and differential"/>
</dbReference>
<dbReference type="GO" id="GO:0005634">
    <property type="term" value="C:nucleus"/>
    <property type="evidence" value="ECO:0007669"/>
    <property type="project" value="UniProtKB-SubCell"/>
</dbReference>
<dbReference type="GO" id="GO:0006974">
    <property type="term" value="P:DNA damage response"/>
    <property type="evidence" value="ECO:0000270"/>
    <property type="project" value="TAIR"/>
</dbReference>
<dbReference type="GO" id="GO:0006281">
    <property type="term" value="P:DNA repair"/>
    <property type="evidence" value="ECO:0007669"/>
    <property type="project" value="InterPro"/>
</dbReference>
<dbReference type="GO" id="GO:0007276">
    <property type="term" value="P:gamete generation"/>
    <property type="evidence" value="ECO:0000315"/>
    <property type="project" value="TAIR"/>
</dbReference>
<dbReference type="GO" id="GO:0010212">
    <property type="term" value="P:response to ionizing radiation"/>
    <property type="evidence" value="ECO:0000270"/>
    <property type="project" value="TAIR"/>
</dbReference>
<dbReference type="InterPro" id="IPR013882">
    <property type="entry name" value="Ctp1_C"/>
</dbReference>
<dbReference type="InterPro" id="IPR033316">
    <property type="entry name" value="RBBP8-like"/>
</dbReference>
<dbReference type="PANTHER" id="PTHR15107:SF0">
    <property type="entry name" value="DNA ENDONUCLEASE ACTIVATOR CTP1 C-TERMINAL DOMAIN-CONTAINING PROTEIN"/>
    <property type="match status" value="1"/>
</dbReference>
<dbReference type="PANTHER" id="PTHR15107">
    <property type="entry name" value="RETINOBLASTOMA BINDING PROTEIN 8"/>
    <property type="match status" value="1"/>
</dbReference>
<dbReference type="Pfam" id="PF08573">
    <property type="entry name" value="SAE2"/>
    <property type="match status" value="1"/>
</dbReference>
<proteinExistence type="evidence at protein level"/>
<keyword id="KW-0175">Coiled coil</keyword>
<keyword id="KW-0227">DNA damage</keyword>
<keyword id="KW-0539">Nucleus</keyword>
<keyword id="KW-1185">Reference proteome</keyword>
<gene>
    <name type="primary">GR1</name>
    <name type="ordered locus">At3g52115</name>
    <name type="ORF">F4F15.230</name>
</gene>
<sequence>MGDETVDGIEAKYISGLSTIMVATIQEAKDRISQIEYIFCSQLFPNFQSKSKAFEKVYSEARLAACDTWKDREKSLLDQIEELKVENQQIKSDKEKLAEELGKTASMPLRLTSLQGYIDHLKKKMKSRSKMVGDARDLYYRLVELLQVKGLDELSEDGINMIVSEVKSLKMKTEFLQEELSKKTLVTENLLKKLEYLSTEAADGERKLSSVEEEKQRLKTRLQVFEENVGRLEEILRQKTDEVEEGKTALEVLQGKLKLTEREMLNCKQKIADHEKEKTVVMGKAKDDMQGRHGSYLADLEALRCQSEEKSFELAMEIKKNKELSRTCKKWKSQHTFLCKRFNFTPDSVLHQSSLEDENKEIGQHEKSAISSYLERKHSETAEGADKVRIGTGSSGNNYEKESIIKTVQTPITSISPIVRSPGAAKPPQLSGLKRPASIWRDTRSRQSPGGHDPHDDFLDTPIENVKRVAGEEKHVHDVAKKDDSDDETQDMNPKPSPSRQRIQIAETSKKSFKHVESVRKKAERENLKGIECKQCKKFYDAVHPENEGNGNKSLRCEHHEGVSRHRYRYAPPMTPEGFWNIGFESEM</sequence>
<feature type="chain" id="PRO_0000076223" description="Protein gamma response 1">
    <location>
        <begin position="1"/>
        <end position="588"/>
    </location>
</feature>
<feature type="region of interest" description="Disordered" evidence="2">
    <location>
        <begin position="377"/>
        <end position="398"/>
    </location>
</feature>
<feature type="region of interest" description="Disordered" evidence="2">
    <location>
        <begin position="417"/>
        <end position="525"/>
    </location>
</feature>
<feature type="coiled-coil region" evidence="1">
    <location>
        <begin position="64"/>
        <end position="104"/>
    </location>
</feature>
<feature type="coiled-coil region" evidence="1">
    <location>
        <begin position="164"/>
        <end position="281"/>
    </location>
</feature>
<feature type="compositionally biased region" description="Basic and acidic residues" evidence="2">
    <location>
        <begin position="377"/>
        <end position="389"/>
    </location>
</feature>
<feature type="compositionally biased region" description="Basic and acidic residues" evidence="2">
    <location>
        <begin position="465"/>
        <end position="484"/>
    </location>
</feature>
<feature type="compositionally biased region" description="Basic and acidic residues" evidence="2">
    <location>
        <begin position="508"/>
        <end position="525"/>
    </location>
</feature>
<feature type="sequence conflict" description="In Ref. 1; CAA10484." evidence="4" ref="1">
    <original>IS</original>
    <variation>NL</variation>
    <location>
        <begin position="14"/>
        <end position="15"/>
    </location>
</feature>
<feature type="sequence conflict" description="In Ref. 1; CAA10484." evidence="4" ref="1">
    <original>A</original>
    <variation>R</variation>
    <location>
        <position position="64"/>
    </location>
</feature>
<feature type="sequence conflict" description="In Ref. 1; CAA10484." evidence="4" ref="1">
    <original>E</original>
    <variation>EE</variation>
    <location>
        <position position="178"/>
    </location>
</feature>
<name>GR1_ARATH</name>
<protein>
    <recommendedName>
        <fullName>Protein gamma response 1</fullName>
    </recommendedName>
    <alternativeName>
        <fullName>COM1/SAE2-like protein</fullName>
    </alternativeName>
    <alternativeName>
        <fullName>Protein gamma response I</fullName>
    </alternativeName>
</protein>
<accession>Q9ZRT1</accession>
<accession>A9NJH0</accession>
<accession>Q9SUZ3</accession>
<organism>
    <name type="scientific">Arabidopsis thaliana</name>
    <name type="common">Mouse-ear cress</name>
    <dbReference type="NCBI Taxonomy" id="3702"/>
    <lineage>
        <taxon>Eukaryota</taxon>
        <taxon>Viridiplantae</taxon>
        <taxon>Streptophyta</taxon>
        <taxon>Embryophyta</taxon>
        <taxon>Tracheophyta</taxon>
        <taxon>Spermatophyta</taxon>
        <taxon>Magnoliopsida</taxon>
        <taxon>eudicotyledons</taxon>
        <taxon>Gunneridae</taxon>
        <taxon>Pentapetalae</taxon>
        <taxon>rosids</taxon>
        <taxon>malvids</taxon>
        <taxon>Brassicales</taxon>
        <taxon>Brassicaceae</taxon>
        <taxon>Camelineae</taxon>
        <taxon>Arabidopsis</taxon>
    </lineage>
</organism>
<comment type="function">
    <text evidence="3">Seems to mediate cell cycle arrest before mitosis in response to DNA damage. Is probably also involved in the transition from mitosis to endoreduplication.</text>
</comment>
<comment type="subcellular location">
    <subcellularLocation>
        <location evidence="4">Nucleus</location>
    </subcellularLocation>
</comment>
<comment type="tissue specificity">
    <text evidence="3">Basal levels in mitotically dividing cells (meristems), and high levels in endoreduplicating cells (stipules, trichomes) (at protein level).</text>
</comment>
<comment type="induction">
    <text evidence="3">Strongly induced by ionizing radiation in a dose-dependent way. Regulated by ATM in response to DNA double strand breaks (DSBs) (at protein level).</text>
</comment>
<comment type="sequence caution" evidence="4">
    <conflict type="erroneous gene model prediction">
        <sequence resource="EMBL-CDS" id="CAB41332"/>
    </conflict>
    <text>The predicted gene At3g52120 has been split into 2 genes: At3g52115 and At3g52120.</text>
</comment>